<feature type="chain" id="PRO_0000059360" description="Disulfide bond formation protein B">
    <location>
        <begin position="1"/>
        <end position="165" status="greater than"/>
    </location>
</feature>
<feature type="topological domain" description="Cytoplasmic" evidence="1">
    <location>
        <begin position="1"/>
        <end position="16"/>
    </location>
</feature>
<feature type="transmembrane region" description="Helical" evidence="1">
    <location>
        <begin position="17"/>
        <end position="33"/>
    </location>
</feature>
<feature type="topological domain" description="Periplasmic" evidence="1">
    <location>
        <begin position="34"/>
        <end position="51"/>
    </location>
</feature>
<feature type="transmembrane region" description="Helical" evidence="1">
    <location>
        <begin position="52"/>
        <end position="67"/>
    </location>
</feature>
<feature type="topological domain" description="Cytoplasmic" evidence="1">
    <location>
        <begin position="68"/>
        <end position="74"/>
    </location>
</feature>
<feature type="transmembrane region" description="Helical" evidence="1">
    <location>
        <begin position="75"/>
        <end position="92"/>
    </location>
</feature>
<feature type="topological domain" description="Periplasmic" evidence="1">
    <location>
        <begin position="93"/>
        <end position="147"/>
    </location>
</feature>
<feature type="transmembrane region" description="Helical" evidence="1">
    <location>
        <begin position="148"/>
        <end position="165" status="greater than"/>
    </location>
</feature>
<feature type="disulfide bond" description="Redox-active" evidence="1">
    <location>
        <begin position="43"/>
        <end position="46"/>
    </location>
</feature>
<feature type="disulfide bond" description="Redox-active" evidence="1">
    <location>
        <begin position="107"/>
        <end position="133"/>
    </location>
</feature>
<feature type="non-terminal residue">
    <location>
        <position position="165"/>
    </location>
</feature>
<reference key="1">
    <citation type="submission" date="1996-07" db="EMBL/GenBank/DDBJ databases">
        <authorList>
            <person name="Nakamura T."/>
            <person name="Enomoto H."/>
            <person name="Unemoto T."/>
        </authorList>
    </citation>
    <scope>NUCLEOTIDE SEQUENCE [GENOMIC DNA]</scope>
    <source>
        <strain>B138-2</strain>
    </source>
</reference>
<accession>Q56578</accession>
<organism>
    <name type="scientific">Vibrio alginolyticus</name>
    <dbReference type="NCBI Taxonomy" id="663"/>
    <lineage>
        <taxon>Bacteria</taxon>
        <taxon>Pseudomonadati</taxon>
        <taxon>Pseudomonadota</taxon>
        <taxon>Gammaproteobacteria</taxon>
        <taxon>Vibrionales</taxon>
        <taxon>Vibrionaceae</taxon>
        <taxon>Vibrio</taxon>
    </lineage>
</organism>
<gene>
    <name evidence="1" type="primary">dsbB</name>
</gene>
<comment type="function">
    <text evidence="1">Required for disulfide bond formation in some periplasmic proteins. Acts by oxidizing the DsbA protein.</text>
</comment>
<comment type="subcellular location">
    <subcellularLocation>
        <location evidence="1">Cell inner membrane</location>
        <topology evidence="1">Multi-pass membrane protein</topology>
    </subcellularLocation>
</comment>
<comment type="similarity">
    <text evidence="1">Belongs to the DsbB family.</text>
</comment>
<dbReference type="EMBL" id="D83728">
    <property type="protein sequence ID" value="BAA12087.1"/>
    <property type="molecule type" value="Genomic_DNA"/>
</dbReference>
<dbReference type="SMR" id="Q56578"/>
<dbReference type="STRING" id="663.BAU10_09510"/>
<dbReference type="eggNOG" id="COG1495">
    <property type="taxonomic scope" value="Bacteria"/>
</dbReference>
<dbReference type="GO" id="GO:0005886">
    <property type="term" value="C:plasma membrane"/>
    <property type="evidence" value="ECO:0007669"/>
    <property type="project" value="UniProtKB-SubCell"/>
</dbReference>
<dbReference type="GO" id="GO:0015035">
    <property type="term" value="F:protein-disulfide reductase activity"/>
    <property type="evidence" value="ECO:0007669"/>
    <property type="project" value="InterPro"/>
</dbReference>
<dbReference type="GO" id="GO:0006457">
    <property type="term" value="P:protein folding"/>
    <property type="evidence" value="ECO:0007669"/>
    <property type="project" value="InterPro"/>
</dbReference>
<dbReference type="Gene3D" id="1.20.1550.10">
    <property type="entry name" value="DsbB-like"/>
    <property type="match status" value="1"/>
</dbReference>
<dbReference type="HAMAP" id="MF_00286">
    <property type="entry name" value="DsbB"/>
    <property type="match status" value="1"/>
</dbReference>
<dbReference type="InterPro" id="IPR003752">
    <property type="entry name" value="DiS_bond_form_DsbB/BdbC"/>
</dbReference>
<dbReference type="InterPro" id="IPR022920">
    <property type="entry name" value="Disulphide_bond_form_DsbB"/>
</dbReference>
<dbReference type="InterPro" id="IPR050183">
    <property type="entry name" value="DsbB"/>
</dbReference>
<dbReference type="InterPro" id="IPR023380">
    <property type="entry name" value="DsbB-like_sf"/>
</dbReference>
<dbReference type="NCBIfam" id="NF002485">
    <property type="entry name" value="PRK01749.1"/>
    <property type="match status" value="1"/>
</dbReference>
<dbReference type="PANTHER" id="PTHR36570">
    <property type="entry name" value="DISULFIDE BOND FORMATION PROTEIN B"/>
    <property type="match status" value="1"/>
</dbReference>
<dbReference type="PANTHER" id="PTHR36570:SF2">
    <property type="entry name" value="DISULFIDE BOND FORMATION PROTEIN B"/>
    <property type="match status" value="1"/>
</dbReference>
<dbReference type="Pfam" id="PF02600">
    <property type="entry name" value="DsbB"/>
    <property type="match status" value="1"/>
</dbReference>
<dbReference type="SUPFAM" id="SSF158442">
    <property type="entry name" value="DsbB-like"/>
    <property type="match status" value="1"/>
</dbReference>
<sequence length="165" mass="18745">MTILNSLNQFSKGRLSWLLLLLFVVFFEACALYFQHVMMLAPCVMCIYERVAMMGVGVAAIVGLMAPNNPIFRWLGLIGWGLSSYKGLLLAQQHVDYQFNPSPFATCDLFVTFPSWRPLNQWAPWIFEAYGDCSKIVWQFLDLSMPQWLVVIFAGNLIALALIVI</sequence>
<name>DSBB_VIBAL</name>
<keyword id="KW-0997">Cell inner membrane</keyword>
<keyword id="KW-1003">Cell membrane</keyword>
<keyword id="KW-0143">Chaperone</keyword>
<keyword id="KW-1015">Disulfide bond</keyword>
<keyword id="KW-0249">Electron transport</keyword>
<keyword id="KW-0472">Membrane</keyword>
<keyword id="KW-0560">Oxidoreductase</keyword>
<keyword id="KW-0676">Redox-active center</keyword>
<keyword id="KW-0812">Transmembrane</keyword>
<keyword id="KW-1133">Transmembrane helix</keyword>
<keyword id="KW-0813">Transport</keyword>
<protein>
    <recommendedName>
        <fullName evidence="1">Disulfide bond formation protein B</fullName>
    </recommendedName>
    <alternativeName>
        <fullName evidence="1">Disulfide oxidoreductase</fullName>
    </alternativeName>
</protein>
<proteinExistence type="inferred from homology"/>
<evidence type="ECO:0000255" key="1">
    <source>
        <dbReference type="HAMAP-Rule" id="MF_00286"/>
    </source>
</evidence>